<reference key="1">
    <citation type="journal article" date="2007" name="Plant Biotechnol. J.">
        <title>The complete nucleotide sequence of the coffee (Coffea arabica L.) chloroplast genome: organization and implications for biotechnology and phylogenetic relationships amongst angiosperms.</title>
        <authorList>
            <person name="Samson N."/>
            <person name="Bausher M.G."/>
            <person name="Lee S.-B."/>
            <person name="Jansen R.K."/>
            <person name="Daniell H."/>
        </authorList>
    </citation>
    <scope>NUCLEOTIDE SEQUENCE [LARGE SCALE GENOMIC DNA]</scope>
</reference>
<gene>
    <name evidence="1" type="primary">ycf2-A</name>
</gene>
<gene>
    <name evidence="1" type="primary">ycf2-B</name>
</gene>
<comment type="function">
    <text>Probable ATPase of unknown function. Its presence in a non-photosynthetic plant (Epifagus virginiana) and experiments in tobacco indicate that it has an essential function which is probably not related to photosynthesis.</text>
</comment>
<comment type="subcellular location">
    <subcellularLocation>
        <location evidence="1">Plastid</location>
        <location evidence="1">Chloroplast stroma</location>
    </subcellularLocation>
</comment>
<comment type="similarity">
    <text evidence="1">Belongs to the Ycf2 family.</text>
</comment>
<dbReference type="EMBL" id="EF044213">
    <property type="protein sequence ID" value="ABJ89722.1"/>
    <property type="molecule type" value="Genomic_DNA"/>
</dbReference>
<dbReference type="EMBL" id="EF044213">
    <property type="protein sequence ID" value="ABJ89741.1"/>
    <property type="molecule type" value="Genomic_DNA"/>
</dbReference>
<dbReference type="OrthoDB" id="1669967at2759"/>
<dbReference type="Proteomes" id="UP000515148">
    <property type="component" value="Unplaced"/>
</dbReference>
<dbReference type="GO" id="GO:0009570">
    <property type="term" value="C:chloroplast stroma"/>
    <property type="evidence" value="ECO:0007669"/>
    <property type="project" value="UniProtKB-SubCell"/>
</dbReference>
<dbReference type="GO" id="GO:0005524">
    <property type="term" value="F:ATP binding"/>
    <property type="evidence" value="ECO:0007669"/>
    <property type="project" value="UniProtKB-KW"/>
</dbReference>
<dbReference type="GO" id="GO:0016887">
    <property type="term" value="F:ATP hydrolysis activity"/>
    <property type="evidence" value="ECO:0007669"/>
    <property type="project" value="InterPro"/>
</dbReference>
<dbReference type="CDD" id="cd19505">
    <property type="entry name" value="RecA-like_Ycf2"/>
    <property type="match status" value="1"/>
</dbReference>
<dbReference type="Gene3D" id="3.40.50.300">
    <property type="entry name" value="P-loop containing nucleotide triphosphate hydrolases"/>
    <property type="match status" value="1"/>
</dbReference>
<dbReference type="HAMAP" id="MF_01330">
    <property type="entry name" value="Ycf2"/>
    <property type="match status" value="1"/>
</dbReference>
<dbReference type="InterPro" id="IPR003593">
    <property type="entry name" value="AAA+_ATPase"/>
</dbReference>
<dbReference type="InterPro" id="IPR003959">
    <property type="entry name" value="ATPase_AAA_core"/>
</dbReference>
<dbReference type="InterPro" id="IPR027417">
    <property type="entry name" value="P-loop_NTPase"/>
</dbReference>
<dbReference type="InterPro" id="IPR008543">
    <property type="entry name" value="Uncharacterised_Ycf2"/>
</dbReference>
<dbReference type="InterPro" id="IPR056777">
    <property type="entry name" value="Ycf2_N"/>
</dbReference>
<dbReference type="PANTHER" id="PTHR33078:SF51">
    <property type="entry name" value="PROTEIN TIC 214"/>
    <property type="match status" value="1"/>
</dbReference>
<dbReference type="PANTHER" id="PTHR33078">
    <property type="entry name" value="PROTEIN YCF2-RELATED"/>
    <property type="match status" value="1"/>
</dbReference>
<dbReference type="Pfam" id="PF00004">
    <property type="entry name" value="AAA"/>
    <property type="match status" value="1"/>
</dbReference>
<dbReference type="Pfam" id="PF05695">
    <property type="entry name" value="Ycf2"/>
    <property type="match status" value="1"/>
</dbReference>
<dbReference type="SMART" id="SM00382">
    <property type="entry name" value="AAA"/>
    <property type="match status" value="1"/>
</dbReference>
<dbReference type="SUPFAM" id="SSF52540">
    <property type="entry name" value="P-loop containing nucleoside triphosphate hydrolases"/>
    <property type="match status" value="1"/>
</dbReference>
<name>YCF2_COFAR</name>
<accession>A0A379</accession>
<protein>
    <recommendedName>
        <fullName evidence="1">Protein Ycf2</fullName>
    </recommendedName>
</protein>
<evidence type="ECO:0000255" key="1">
    <source>
        <dbReference type="HAMAP-Rule" id="MF_01330"/>
    </source>
</evidence>
<sequence>MKGHQFKSWIFELREILREIKNSHYFLDSWTQFNSVGSFIHIFFHQERFIKLFDPRIWSILLSRNSQGSISNRYFTIKGVILFVVVVLIYRINNRNMVESKNLYLIGLLPIPMNSIGPKNDTLEESVGSSNINRLIVSLLSLPKGKKISESCFLNPKESTWVLPITKKCSIPESNWGSRWWRKWIGKGGDSSCKISNETAAGIEILFKEKDLKYLEFLFVYYMDDPTRKDRDWELFDRLSLRKRRNTINLNSGPLFEILVKHWISYLMSAFREKIPIEAEGFFKQQGAGSTIQSNDIEHVSHLFSRNKWAISLQNCAQFHMWQFRQDLFISWGKESDFLRNVSRENLIWLDNVWLVNKDRFFSKVRNVSSNIQYDSTRSSFVQVTDSSQLKGSSDQSRDHLDSISNEDSEYHTLINQREIQQLKERSILLDPSFLQTERTEIESDRFPKCLSGYSSMSRLFTEREKQMINHLLPEEIEEFLGNPTRSVRSFFSDRWSELHLGLNPTERSTRDQKLLKKQQDLSFVPSRRSENKEMVNIFKIITYLQNTVSIHPISSDPGCDMVPKDEPDMDSSNKISFLNKNPFFDLFHLFHARNRGGYTLHHDFELEERFQEMADLFTLSITEPDLVYHKGFAFSIDSYGLDQKQFLNEVFNSRDESKKKSLLVLPLIFYEENESFSRRIRKKWVRISCGNDLEDPQPKIVIFASNNIMGAVNQYRLIRNLIQIQSSTYGYIRNVLNRFFLMNRSDRNFEYGIQIQRDQIGKDTLNHRTIMKYTINQHLSNLKKSQKKWLDPLILISRTERSMNRDPDAYRYKGSNGSKNFQEHLEHFVSEQKSHFQVMFDRLRINQYSIDWSEVIDKKDLSKPLRFFLSKSLLFLSKLLFFLSNSLPFFCVSFGNIPIHRSEIYIYEFKGPDDQLCSQLLESIGLQIVHLKKLKPFLLDDHDTSQKSKFLINGGTISPFLFNKIPKWMVDSFHTRNNRRKSFDNTDSYFSMIFHDQDNWLNPVKPFHRSSLISSFYKANRLRFLNNPHHFCFYCNTRFPLSVEKARINNYDFTYGQFLNILLRMNKIFSLCVGKKKHAFGGRDTISPIESQVSNIFIPNDFPQSGDETYNLYKSFHFLSRSDPFVRRAIYSIADISGTPLTEGQIVNFERTYCQPLSDMNLSDSEGKNLHQYRNFNSNMGLIHTPYSEKYLPSEKRKKRILCLKKCVEKGQMYRTFQRDSAFSTLSKWNLFQTYMPWFLTSTGYKYLNLIFLDTFSDLLPILSSSQKLVSIFHDIMHGSGISWRILQKNLCLPQWNLISEISSKCLHNLLLSEERIHRNKNNESPLISTHLRSPNVREFLYSTLFLLLVAGYLVRTHLLFVSRVSSELQTEFEKVKSLIIPSSMIELRKLLDRYPTSEPNSFWLKNIFLAALEQLGDSLEEIRGSASGGNMLGPAYGVKSIRSKKKYLNINLIDIVDLIPNPINRITFSRNTRHLSHTSKEIYSLIRKRKNVNGDWIDDKIESWVANSDSIGDEEREFLVQFSTLTTEKGIDQILLSLTHSDHLSKNDSGYQMIEQPGAIYLRYLVDIHKKYLMNYEFNTFCLAERRIFLAHYQTITYSQTSCGANSFHFPSHGKPFSLRLALSPSRAILVIGSIGSGRSYLVKYLATNSYVPFITVFLNKFLDNKPKGFLIDDINIDDSDDIDASDDIDRDLDTELELLTMMNALTMDMMPEIDRFYITLQFELAKAMSPCIIWIPNIHDLDVNESNYLSLGLLVNHLSMDCERCSTRNILVIASTHIPQKVDPALIAPNKLNTCIKIRRLLIPQQRKHLFTLSYTRGFHLEKKMFHTNGFGSITMGSNARDLVALTNEALSISITQKKSIIDTNTIRSALYRQTWYLRSQVRSVQDHGILFYQIGRAVAQNVFLSNCPIDPISIYMKKKSCNEGDFYLYKWYFELGTSMKKLTILLYLLSCSAGSVAQDLWSLPGPDEKNGITSYGLVENDSDLVHGLLEVEGALVGSSRTEKDCSQFDNDRVTLLLRPEPRNPLDMMQSGSCSILDQRFLYEKYESEFEEGEGEGALDPQQIEEDLFNYIVWAPRIWRPWAFLFDCIERPNELGFPYWSRPFWGKRIIYDEEDELQENDSEFLQNGTVQYQTRDRSSKEQGPFRISQFIWDPADPLFFLFKDQPPGSVFSHRELFADEEMSKGLLTSQTDPPTSIYKRWFIKNTQEKHFELLINRQRWLRTNSSLSNGSFRSNTLSESYQYLSNLFLSNGTLLDQMTKTLLRKRWLFPDEMKIGFM</sequence>
<keyword id="KW-0067">ATP-binding</keyword>
<keyword id="KW-0150">Chloroplast</keyword>
<keyword id="KW-0547">Nucleotide-binding</keyword>
<keyword id="KW-0934">Plastid</keyword>
<keyword id="KW-1185">Reference proteome</keyword>
<organism>
    <name type="scientific">Coffea arabica</name>
    <name type="common">Arabian coffee</name>
    <dbReference type="NCBI Taxonomy" id="13443"/>
    <lineage>
        <taxon>Eukaryota</taxon>
        <taxon>Viridiplantae</taxon>
        <taxon>Streptophyta</taxon>
        <taxon>Embryophyta</taxon>
        <taxon>Tracheophyta</taxon>
        <taxon>Spermatophyta</taxon>
        <taxon>Magnoliopsida</taxon>
        <taxon>eudicotyledons</taxon>
        <taxon>Gunneridae</taxon>
        <taxon>Pentapetalae</taxon>
        <taxon>asterids</taxon>
        <taxon>lamiids</taxon>
        <taxon>Gentianales</taxon>
        <taxon>Rubiaceae</taxon>
        <taxon>Ixoroideae</taxon>
        <taxon>Gardenieae complex</taxon>
        <taxon>Bertiereae - Coffeeae clade</taxon>
        <taxon>Coffeeae</taxon>
        <taxon>Coffea</taxon>
    </lineage>
</organism>
<feature type="chain" id="PRO_0000276549" description="Protein Ycf2">
    <location>
        <begin position="1"/>
        <end position="2281"/>
    </location>
</feature>
<feature type="binding site" evidence="1">
    <location>
        <begin position="1635"/>
        <end position="1642"/>
    </location>
    <ligand>
        <name>ATP</name>
        <dbReference type="ChEBI" id="CHEBI:30616"/>
    </ligand>
</feature>
<proteinExistence type="inferred from homology"/>
<geneLocation type="chloroplast"/>